<gene>
    <name type="primary">trmY</name>
    <name type="ordered locus">AF_1056</name>
</gene>
<evidence type="ECO:0000250" key="1"/>
<evidence type="ECO:0000269" key="2">
    <source ref="2"/>
</evidence>
<evidence type="ECO:0000305" key="3"/>
<evidence type="ECO:0007829" key="4">
    <source>
        <dbReference type="PDB" id="2QMM"/>
    </source>
</evidence>
<dbReference type="EC" id="2.1.1.257"/>
<dbReference type="EMBL" id="AE000782">
    <property type="protein sequence ID" value="AAB90184.1"/>
    <property type="molecule type" value="Genomic_DNA"/>
</dbReference>
<dbReference type="PIR" id="H69381">
    <property type="entry name" value="H69381"/>
</dbReference>
<dbReference type="PDB" id="2QMM">
    <property type="method" value="X-ray"/>
    <property type="resolution" value="1.85 A"/>
    <property type="chains" value="A/B=95-288"/>
</dbReference>
<dbReference type="PDBsum" id="2QMM"/>
<dbReference type="SMR" id="O29206"/>
<dbReference type="STRING" id="224325.AF_1056"/>
<dbReference type="PaxDb" id="224325-AF_1056"/>
<dbReference type="EnsemblBacteria" id="AAB90184">
    <property type="protein sequence ID" value="AAB90184"/>
    <property type="gene ID" value="AF_1056"/>
</dbReference>
<dbReference type="KEGG" id="afu:AF_1056"/>
<dbReference type="eggNOG" id="arCOG01239">
    <property type="taxonomic scope" value="Archaea"/>
</dbReference>
<dbReference type="HOGENOM" id="CLU_965053_0_0_2"/>
<dbReference type="PhylomeDB" id="O29206"/>
<dbReference type="EvolutionaryTrace" id="O29206"/>
<dbReference type="Proteomes" id="UP000002199">
    <property type="component" value="Chromosome"/>
</dbReference>
<dbReference type="GO" id="GO:0005737">
    <property type="term" value="C:cytoplasm"/>
    <property type="evidence" value="ECO:0007669"/>
    <property type="project" value="UniProtKB-SubCell"/>
</dbReference>
<dbReference type="GO" id="GO:0008757">
    <property type="term" value="F:S-adenosylmethionine-dependent methyltransferase activity"/>
    <property type="evidence" value="ECO:0007669"/>
    <property type="project" value="UniProtKB-UniRule"/>
</dbReference>
<dbReference type="GO" id="GO:0008175">
    <property type="term" value="F:tRNA methyltransferase activity"/>
    <property type="evidence" value="ECO:0007669"/>
    <property type="project" value="UniProtKB-UniRule"/>
</dbReference>
<dbReference type="GO" id="GO:0030488">
    <property type="term" value="P:tRNA methylation"/>
    <property type="evidence" value="ECO:0007669"/>
    <property type="project" value="UniProtKB-UniRule"/>
</dbReference>
<dbReference type="CDD" id="cd18087">
    <property type="entry name" value="TrmY-like"/>
    <property type="match status" value="1"/>
</dbReference>
<dbReference type="Gene3D" id="3.40.1280.10">
    <property type="match status" value="1"/>
</dbReference>
<dbReference type="HAMAP" id="MF_00587">
    <property type="entry name" value="tRNA_methyltr_TrmY"/>
    <property type="match status" value="1"/>
</dbReference>
<dbReference type="InterPro" id="IPR029028">
    <property type="entry name" value="Alpha/beta_knot_MTases"/>
</dbReference>
<dbReference type="InterPro" id="IPR007158">
    <property type="entry name" value="TrmY"/>
</dbReference>
<dbReference type="InterPro" id="IPR029026">
    <property type="entry name" value="tRNA_m1G_MTases_N"/>
</dbReference>
<dbReference type="NCBIfam" id="NF002560">
    <property type="entry name" value="PRK02135.1"/>
    <property type="match status" value="1"/>
</dbReference>
<dbReference type="PANTHER" id="PTHR40703">
    <property type="entry name" value="TRNA (PSEUDOURIDINE(54)-N(1))-METHYLTRANSFERASE"/>
    <property type="match status" value="1"/>
</dbReference>
<dbReference type="PANTHER" id="PTHR40703:SF1">
    <property type="entry name" value="TRNA (PSEUDOURIDINE(54)-N(1))-METHYLTRANSFERASE"/>
    <property type="match status" value="1"/>
</dbReference>
<dbReference type="Pfam" id="PF04013">
    <property type="entry name" value="Methyltrn_RNA_2"/>
    <property type="match status" value="1"/>
</dbReference>
<dbReference type="SUPFAM" id="SSF75217">
    <property type="entry name" value="alpha/beta knot"/>
    <property type="match status" value="1"/>
</dbReference>
<name>TRMY_ARCFU</name>
<sequence length="288" mass="32192">MENPDSAFLLFRNAPRLPLATMHTPLCGDSHQPDFAFRKPARDALLRPWNGRNHRCGLQDGREICQGQLPAHQKSYWSDCAALPRLFRAYGGAVVRGFLIVGNKAFTQPFSLNDLPGAGRMDVLCRCTSQALFISHGIRRDVEVYLLLLGPPSPPKSILIKGDEVRRMSPDERNVAGHIKKALAVECGKSWKKVHSGVYVSRKGLEELIEELSEKYSIIYLKEDGVDISNAQLPPNPLFVIGDHEGLTEEQEKVVERYAALKLSLSPLSLLAEQCVVIAHHHLDRLQF</sequence>
<proteinExistence type="evidence at protein level"/>
<protein>
    <recommendedName>
        <fullName>tRNA (pseudouridine(54)-N(1))-methyltransferase</fullName>
        <ecNumber>2.1.1.257</ecNumber>
    </recommendedName>
</protein>
<comment type="function">
    <text evidence="1">Specifically catalyzes the N1-methylation of pseudouridine at position 54 (Psi54) in tRNAs.</text>
</comment>
<comment type="catalytic activity">
    <reaction>
        <text>pseudouridine(54) in tRNA + S-adenosyl-L-methionine = N(1)-methylpseudouridine(54) in tRNA + S-adenosyl-L-homocysteine + H(+)</text>
        <dbReference type="Rhea" id="RHEA:55292"/>
        <dbReference type="Rhea" id="RHEA-COMP:14140"/>
        <dbReference type="Rhea" id="RHEA-COMP:14141"/>
        <dbReference type="ChEBI" id="CHEBI:15378"/>
        <dbReference type="ChEBI" id="CHEBI:57856"/>
        <dbReference type="ChEBI" id="CHEBI:59789"/>
        <dbReference type="ChEBI" id="CHEBI:65314"/>
        <dbReference type="ChEBI" id="CHEBI:74890"/>
        <dbReference type="EC" id="2.1.1.257"/>
    </reaction>
</comment>
<comment type="subunit">
    <text evidence="1">Homodimer.</text>
</comment>
<comment type="subcellular location">
    <subcellularLocation>
        <location evidence="3">Cytoplasm</location>
    </subcellularLocation>
</comment>
<comment type="similarity">
    <text evidence="3">Belongs to the methyltransferase superfamily. TrmY family.</text>
</comment>
<feature type="chain" id="PRO_0000157945" description="tRNA (pseudouridine(54)-N(1))-methyltransferase">
    <location>
        <begin position="1"/>
        <end position="288"/>
    </location>
</feature>
<feature type="region of interest" description="Unknown">
    <location>
        <begin position="1"/>
        <end position="94"/>
    </location>
</feature>
<feature type="region of interest" description="Methyltransferase">
    <location>
        <begin position="95"/>
        <end position="288"/>
    </location>
</feature>
<feature type="binding site">
    <location>
        <begin position="221"/>
        <end position="223"/>
    </location>
    <ligand>
        <name>S-adenosyl-L-methionine</name>
        <dbReference type="ChEBI" id="CHEBI:59789"/>
    </ligand>
</feature>
<feature type="binding site" evidence="2">
    <location>
        <position position="242"/>
    </location>
    <ligand>
        <name>S-adenosyl-L-methionine</name>
        <dbReference type="ChEBI" id="CHEBI:59789"/>
    </ligand>
</feature>
<feature type="binding site">
    <location>
        <begin position="265"/>
        <end position="270"/>
    </location>
    <ligand>
        <name>S-adenosyl-L-methionine</name>
        <dbReference type="ChEBI" id="CHEBI:59789"/>
    </ligand>
</feature>
<feature type="binding site" evidence="2">
    <location>
        <position position="275"/>
    </location>
    <ligand>
        <name>S-adenosyl-L-methionine</name>
        <dbReference type="ChEBI" id="CHEBI:59789"/>
    </ligand>
</feature>
<feature type="strand" evidence="4">
    <location>
        <begin position="96"/>
        <end position="104"/>
    </location>
</feature>
<feature type="turn" evidence="4">
    <location>
        <begin position="115"/>
        <end position="119"/>
    </location>
</feature>
<feature type="helix" evidence="4">
    <location>
        <begin position="121"/>
        <end position="132"/>
    </location>
</feature>
<feature type="strand" evidence="4">
    <location>
        <begin position="142"/>
        <end position="148"/>
    </location>
</feature>
<feature type="strand" evidence="4">
    <location>
        <begin position="151"/>
        <end position="153"/>
    </location>
</feature>
<feature type="strand" evidence="4">
    <location>
        <begin position="156"/>
        <end position="161"/>
    </location>
</feature>
<feature type="turn" evidence="4">
    <location>
        <begin position="162"/>
        <end position="164"/>
    </location>
</feature>
<feature type="helix" evidence="4">
    <location>
        <begin position="172"/>
        <end position="184"/>
    </location>
</feature>
<feature type="strand" evidence="4">
    <location>
        <begin position="192"/>
        <end position="195"/>
    </location>
</feature>
<feature type="strand" evidence="4">
    <location>
        <begin position="198"/>
        <end position="201"/>
    </location>
</feature>
<feature type="helix" evidence="4">
    <location>
        <begin position="205"/>
        <end position="215"/>
    </location>
</feature>
<feature type="strand" evidence="4">
    <location>
        <begin position="216"/>
        <end position="221"/>
    </location>
</feature>
<feature type="strand" evidence="4">
    <location>
        <begin position="225"/>
        <end position="227"/>
    </location>
</feature>
<feature type="helix" evidence="4">
    <location>
        <begin position="228"/>
        <end position="230"/>
    </location>
</feature>
<feature type="strand" evidence="4">
    <location>
        <begin position="235"/>
        <end position="242"/>
    </location>
</feature>
<feature type="helix" evidence="4">
    <location>
        <begin position="249"/>
        <end position="256"/>
    </location>
</feature>
<feature type="strand" evidence="4">
    <location>
        <begin position="260"/>
        <end position="264"/>
    </location>
</feature>
<feature type="helix" evidence="4">
    <location>
        <begin position="272"/>
        <end position="287"/>
    </location>
</feature>
<organism>
    <name type="scientific">Archaeoglobus fulgidus (strain ATCC 49558 / DSM 4304 / JCM 9628 / NBRC 100126 / VC-16)</name>
    <dbReference type="NCBI Taxonomy" id="224325"/>
    <lineage>
        <taxon>Archaea</taxon>
        <taxon>Methanobacteriati</taxon>
        <taxon>Methanobacteriota</taxon>
        <taxon>Archaeoglobi</taxon>
        <taxon>Archaeoglobales</taxon>
        <taxon>Archaeoglobaceae</taxon>
        <taxon>Archaeoglobus</taxon>
    </lineage>
</organism>
<reference key="1">
    <citation type="journal article" date="1997" name="Nature">
        <title>The complete genome sequence of the hyperthermophilic, sulphate-reducing archaeon Archaeoglobus fulgidus.</title>
        <authorList>
            <person name="Klenk H.-P."/>
            <person name="Clayton R.A."/>
            <person name="Tomb J.-F."/>
            <person name="White O."/>
            <person name="Nelson K.E."/>
            <person name="Ketchum K.A."/>
            <person name="Dodson R.J."/>
            <person name="Gwinn M.L."/>
            <person name="Hickey E.K."/>
            <person name="Peterson J.D."/>
            <person name="Richardson D.L."/>
            <person name="Kerlavage A.R."/>
            <person name="Graham D.E."/>
            <person name="Kyrpides N.C."/>
            <person name="Fleischmann R.D."/>
            <person name="Quackenbush J."/>
            <person name="Lee N.H."/>
            <person name="Sutton G.G."/>
            <person name="Gill S.R."/>
            <person name="Kirkness E.F."/>
            <person name="Dougherty B.A."/>
            <person name="McKenney K."/>
            <person name="Adams M.D."/>
            <person name="Loftus B.J."/>
            <person name="Peterson S.N."/>
            <person name="Reich C.I."/>
            <person name="McNeil L.K."/>
            <person name="Badger J.H."/>
            <person name="Glodek A."/>
            <person name="Zhou L."/>
            <person name="Overbeek R."/>
            <person name="Gocayne J.D."/>
            <person name="Weidman J.F."/>
            <person name="McDonald L.A."/>
            <person name="Utterback T.R."/>
            <person name="Cotton M.D."/>
            <person name="Spriggs T."/>
            <person name="Artiach P."/>
            <person name="Kaine B.P."/>
            <person name="Sykes S.M."/>
            <person name="Sadow P.W."/>
            <person name="D'Andrea K.P."/>
            <person name="Bowman C."/>
            <person name="Fujii C."/>
            <person name="Garland S.A."/>
            <person name="Mason T.M."/>
            <person name="Olsen G.J."/>
            <person name="Fraser C.M."/>
            <person name="Smith H.O."/>
            <person name="Woese C.R."/>
            <person name="Venter J.C."/>
        </authorList>
    </citation>
    <scope>NUCLEOTIDE SEQUENCE [LARGE SCALE GENOMIC DNA]</scope>
    <source>
        <strain>ATCC 49558 / DSM 4304 / JCM 9628 / NBRC 100126 / VC-16</strain>
    </source>
</reference>
<reference key="2">
    <citation type="submission" date="2009-02" db="PDB data bank">
        <title>Crystal structure of APC86534.1.</title>
        <authorList>
            <consortium name="Midwest center for structural genomics (MCSG)"/>
        </authorList>
    </citation>
    <scope>X-RAY CRYSTALLOGRAPHY (1.85 ANGSTROMS) OF 95-288 IN COMPLEX WITH S-ADENOSYL-L-METHIONINE</scope>
</reference>
<accession>O29206</accession>
<keyword id="KW-0002">3D-structure</keyword>
<keyword id="KW-0963">Cytoplasm</keyword>
<keyword id="KW-0489">Methyltransferase</keyword>
<keyword id="KW-1185">Reference proteome</keyword>
<keyword id="KW-0949">S-adenosyl-L-methionine</keyword>
<keyword id="KW-0808">Transferase</keyword>
<keyword id="KW-0819">tRNA processing</keyword>